<keyword id="KW-0004">4Fe-4S</keyword>
<keyword id="KW-0963">Cytoplasm</keyword>
<keyword id="KW-0408">Iron</keyword>
<keyword id="KW-0411">Iron-sulfur</keyword>
<keyword id="KW-0479">Metal-binding</keyword>
<keyword id="KW-1185">Reference proteome</keyword>
<keyword id="KW-0949">S-adenosyl-L-methionine</keyword>
<keyword id="KW-0808">Transferase</keyword>
<organism>
    <name type="scientific">Rhizobium meliloti (strain 1021)</name>
    <name type="common">Ensifer meliloti</name>
    <name type="synonym">Sinorhizobium meliloti</name>
    <dbReference type="NCBI Taxonomy" id="266834"/>
    <lineage>
        <taxon>Bacteria</taxon>
        <taxon>Pseudomonadati</taxon>
        <taxon>Pseudomonadota</taxon>
        <taxon>Alphaproteobacteria</taxon>
        <taxon>Hyphomicrobiales</taxon>
        <taxon>Rhizobiaceae</taxon>
        <taxon>Sinorhizobium/Ensifer group</taxon>
        <taxon>Sinorhizobium</taxon>
    </lineage>
</organism>
<reference key="1">
    <citation type="journal article" date="2001" name="Proc. Natl. Acad. Sci. U.S.A.">
        <title>Analysis of the chromosome sequence of the legume symbiont Sinorhizobium meliloti strain 1021.</title>
        <authorList>
            <person name="Capela D."/>
            <person name="Barloy-Hubler F."/>
            <person name="Gouzy J."/>
            <person name="Bothe G."/>
            <person name="Ampe F."/>
            <person name="Batut J."/>
            <person name="Boistard P."/>
            <person name="Becker A."/>
            <person name="Boutry M."/>
            <person name="Cadieu E."/>
            <person name="Dreano S."/>
            <person name="Gloux S."/>
            <person name="Godrie T."/>
            <person name="Goffeau A."/>
            <person name="Kahn D."/>
            <person name="Kiss E."/>
            <person name="Lelaure V."/>
            <person name="Masuy D."/>
            <person name="Pohl T."/>
            <person name="Portetelle D."/>
            <person name="Puehler A."/>
            <person name="Purnelle B."/>
            <person name="Ramsperger U."/>
            <person name="Renard C."/>
            <person name="Thebault P."/>
            <person name="Vandenbol M."/>
            <person name="Weidner S."/>
            <person name="Galibert F."/>
        </authorList>
    </citation>
    <scope>NUCLEOTIDE SEQUENCE [LARGE SCALE GENOMIC DNA]</scope>
    <source>
        <strain>1021</strain>
    </source>
</reference>
<reference key="2">
    <citation type="journal article" date="2001" name="Science">
        <title>The composite genome of the legume symbiont Sinorhizobium meliloti.</title>
        <authorList>
            <person name="Galibert F."/>
            <person name="Finan T.M."/>
            <person name="Long S.R."/>
            <person name="Puehler A."/>
            <person name="Abola P."/>
            <person name="Ampe F."/>
            <person name="Barloy-Hubler F."/>
            <person name="Barnett M.J."/>
            <person name="Becker A."/>
            <person name="Boistard P."/>
            <person name="Bothe G."/>
            <person name="Boutry M."/>
            <person name="Bowser L."/>
            <person name="Buhrmester J."/>
            <person name="Cadieu E."/>
            <person name="Capela D."/>
            <person name="Chain P."/>
            <person name="Cowie A."/>
            <person name="Davis R.W."/>
            <person name="Dreano S."/>
            <person name="Federspiel N.A."/>
            <person name="Fisher R.F."/>
            <person name="Gloux S."/>
            <person name="Godrie T."/>
            <person name="Goffeau A."/>
            <person name="Golding B."/>
            <person name="Gouzy J."/>
            <person name="Gurjal M."/>
            <person name="Hernandez-Lucas I."/>
            <person name="Hong A."/>
            <person name="Huizar L."/>
            <person name="Hyman R.W."/>
            <person name="Jones T."/>
            <person name="Kahn D."/>
            <person name="Kahn M.L."/>
            <person name="Kalman S."/>
            <person name="Keating D.H."/>
            <person name="Kiss E."/>
            <person name="Komp C."/>
            <person name="Lelaure V."/>
            <person name="Masuy D."/>
            <person name="Palm C."/>
            <person name="Peck M.C."/>
            <person name="Pohl T.M."/>
            <person name="Portetelle D."/>
            <person name="Purnelle B."/>
            <person name="Ramsperger U."/>
            <person name="Surzycki R."/>
            <person name="Thebault P."/>
            <person name="Vandenbol M."/>
            <person name="Vorhoelter F.J."/>
            <person name="Weidner S."/>
            <person name="Wells D.H."/>
            <person name="Wong K."/>
            <person name="Yeh K.-C."/>
            <person name="Batut J."/>
        </authorList>
    </citation>
    <scope>NUCLEOTIDE SEQUENCE [LARGE SCALE GENOMIC DNA]</scope>
    <source>
        <strain>1021</strain>
    </source>
</reference>
<gene>
    <name evidence="1" type="primary">lipA</name>
    <name type="ordered locus">R01452</name>
    <name type="ORF">SMc01037</name>
</gene>
<name>LIPA_RHIME</name>
<protein>
    <recommendedName>
        <fullName evidence="1">Lipoyl synthase</fullName>
        <ecNumber evidence="1">2.8.1.8</ecNumber>
    </recommendedName>
    <alternativeName>
        <fullName evidence="1">Lip-syn</fullName>
        <shortName evidence="1">LS</shortName>
    </alternativeName>
    <alternativeName>
        <fullName evidence="1">Lipoate synthase</fullName>
    </alternativeName>
    <alternativeName>
        <fullName evidence="1">Lipoic acid synthase</fullName>
    </alternativeName>
    <alternativeName>
        <fullName evidence="1">Sulfur insertion protein LipA</fullName>
    </alternativeName>
</protein>
<proteinExistence type="inferred from homology"/>
<sequence length="322" mass="36096">MVTVFDAVSDRAQRVRHPEKAHRPDTEVLRKPDWIRVKAPTSKGYQETRSIVKSHKLVTVCEEAGCPNIGECWDKKHATFMIMGEICTRACAFCNVATGKPNALDLDEPANVAKAVKQMGLSHVVITSVDRDDLDDGGAEHFEKVIFAIREASPETTIEILTPDFLRKPGALERVVAAKPDVINHNLETVPSNYLTVRPGARYFHSIRLLQRVKELDPTMFTKSGIMVGLGEERNEVLQLMDDLRTADVDFLTIGQYLQPSRKHHKVEKFVTPEEFKSYETVAYTKGFLMVSSSPLTRSSHHAGDDFARLKAARERKLAAAE</sequence>
<comment type="function">
    <text evidence="1">Catalyzes the radical-mediated insertion of two sulfur atoms into the C-6 and C-8 positions of the octanoyl moiety bound to the lipoyl domains of lipoate-dependent enzymes, thereby converting the octanoylated domains into lipoylated derivatives.</text>
</comment>
<comment type="catalytic activity">
    <reaction evidence="1">
        <text>[[Fe-S] cluster scaffold protein carrying a second [4Fe-4S](2+) cluster] + N(6)-octanoyl-L-lysyl-[protein] + 2 oxidized [2Fe-2S]-[ferredoxin] + 2 S-adenosyl-L-methionine + 4 H(+) = [[Fe-S] cluster scaffold protein] + N(6)-[(R)-dihydrolipoyl]-L-lysyl-[protein] + 4 Fe(3+) + 2 hydrogen sulfide + 2 5'-deoxyadenosine + 2 L-methionine + 2 reduced [2Fe-2S]-[ferredoxin]</text>
        <dbReference type="Rhea" id="RHEA:16585"/>
        <dbReference type="Rhea" id="RHEA-COMP:9928"/>
        <dbReference type="Rhea" id="RHEA-COMP:10000"/>
        <dbReference type="Rhea" id="RHEA-COMP:10001"/>
        <dbReference type="Rhea" id="RHEA-COMP:10475"/>
        <dbReference type="Rhea" id="RHEA-COMP:14568"/>
        <dbReference type="Rhea" id="RHEA-COMP:14569"/>
        <dbReference type="ChEBI" id="CHEBI:15378"/>
        <dbReference type="ChEBI" id="CHEBI:17319"/>
        <dbReference type="ChEBI" id="CHEBI:29034"/>
        <dbReference type="ChEBI" id="CHEBI:29919"/>
        <dbReference type="ChEBI" id="CHEBI:33722"/>
        <dbReference type="ChEBI" id="CHEBI:33737"/>
        <dbReference type="ChEBI" id="CHEBI:33738"/>
        <dbReference type="ChEBI" id="CHEBI:57844"/>
        <dbReference type="ChEBI" id="CHEBI:59789"/>
        <dbReference type="ChEBI" id="CHEBI:78809"/>
        <dbReference type="ChEBI" id="CHEBI:83100"/>
        <dbReference type="EC" id="2.8.1.8"/>
    </reaction>
</comment>
<comment type="cofactor">
    <cofactor evidence="1">
        <name>[4Fe-4S] cluster</name>
        <dbReference type="ChEBI" id="CHEBI:49883"/>
    </cofactor>
    <text evidence="1">Binds 2 [4Fe-4S] clusters per subunit. One cluster is coordinated with 3 cysteines and an exchangeable S-adenosyl-L-methionine.</text>
</comment>
<comment type="pathway">
    <text evidence="1">Protein modification; protein lipoylation via endogenous pathway; protein N(6)-(lipoyl)lysine from octanoyl-[acyl-carrier-protein]: step 2/2.</text>
</comment>
<comment type="subcellular location">
    <subcellularLocation>
        <location evidence="1">Cytoplasm</location>
    </subcellularLocation>
</comment>
<comment type="similarity">
    <text evidence="1">Belongs to the radical SAM superfamily. Lipoyl synthase family.</text>
</comment>
<evidence type="ECO:0000255" key="1">
    <source>
        <dbReference type="HAMAP-Rule" id="MF_00206"/>
    </source>
</evidence>
<evidence type="ECO:0000255" key="2">
    <source>
        <dbReference type="PROSITE-ProRule" id="PRU01266"/>
    </source>
</evidence>
<dbReference type="EC" id="2.8.1.8" evidence="1"/>
<dbReference type="EMBL" id="AL591688">
    <property type="protein sequence ID" value="CAC46031.1"/>
    <property type="molecule type" value="Genomic_DNA"/>
</dbReference>
<dbReference type="RefSeq" id="NP_385558.1">
    <property type="nucleotide sequence ID" value="NC_003047.1"/>
</dbReference>
<dbReference type="RefSeq" id="WP_010969231.1">
    <property type="nucleotide sequence ID" value="NC_003047.1"/>
</dbReference>
<dbReference type="SMR" id="Q92Q94"/>
<dbReference type="EnsemblBacteria" id="CAC46031">
    <property type="protein sequence ID" value="CAC46031"/>
    <property type="gene ID" value="SMc01037"/>
</dbReference>
<dbReference type="KEGG" id="sme:SMc01037"/>
<dbReference type="PATRIC" id="fig|266834.11.peg.2872"/>
<dbReference type="eggNOG" id="COG0320">
    <property type="taxonomic scope" value="Bacteria"/>
</dbReference>
<dbReference type="HOGENOM" id="CLU_033144_2_1_5"/>
<dbReference type="OrthoDB" id="9787898at2"/>
<dbReference type="UniPathway" id="UPA00538">
    <property type="reaction ID" value="UER00593"/>
</dbReference>
<dbReference type="Proteomes" id="UP000001976">
    <property type="component" value="Chromosome"/>
</dbReference>
<dbReference type="GO" id="GO:0005737">
    <property type="term" value="C:cytoplasm"/>
    <property type="evidence" value="ECO:0007669"/>
    <property type="project" value="UniProtKB-SubCell"/>
</dbReference>
<dbReference type="GO" id="GO:0051539">
    <property type="term" value="F:4 iron, 4 sulfur cluster binding"/>
    <property type="evidence" value="ECO:0007669"/>
    <property type="project" value="UniProtKB-UniRule"/>
</dbReference>
<dbReference type="GO" id="GO:0016992">
    <property type="term" value="F:lipoate synthase activity"/>
    <property type="evidence" value="ECO:0007669"/>
    <property type="project" value="UniProtKB-UniRule"/>
</dbReference>
<dbReference type="GO" id="GO:0046872">
    <property type="term" value="F:metal ion binding"/>
    <property type="evidence" value="ECO:0007669"/>
    <property type="project" value="UniProtKB-KW"/>
</dbReference>
<dbReference type="CDD" id="cd01335">
    <property type="entry name" value="Radical_SAM"/>
    <property type="match status" value="1"/>
</dbReference>
<dbReference type="FunFam" id="3.20.20.70:FF:000186">
    <property type="entry name" value="Lipoyl synthase"/>
    <property type="match status" value="1"/>
</dbReference>
<dbReference type="Gene3D" id="3.20.20.70">
    <property type="entry name" value="Aldolase class I"/>
    <property type="match status" value="1"/>
</dbReference>
<dbReference type="HAMAP" id="MF_00206">
    <property type="entry name" value="Lipoyl_synth"/>
    <property type="match status" value="1"/>
</dbReference>
<dbReference type="InterPro" id="IPR013785">
    <property type="entry name" value="Aldolase_TIM"/>
</dbReference>
<dbReference type="InterPro" id="IPR006638">
    <property type="entry name" value="Elp3/MiaA/NifB-like_rSAM"/>
</dbReference>
<dbReference type="InterPro" id="IPR031691">
    <property type="entry name" value="LIAS_N"/>
</dbReference>
<dbReference type="InterPro" id="IPR003698">
    <property type="entry name" value="Lipoyl_synth"/>
</dbReference>
<dbReference type="InterPro" id="IPR007197">
    <property type="entry name" value="rSAM"/>
</dbReference>
<dbReference type="NCBIfam" id="TIGR00510">
    <property type="entry name" value="lipA"/>
    <property type="match status" value="1"/>
</dbReference>
<dbReference type="NCBIfam" id="NF004019">
    <property type="entry name" value="PRK05481.1"/>
    <property type="match status" value="1"/>
</dbReference>
<dbReference type="NCBIfam" id="NF009544">
    <property type="entry name" value="PRK12928.1"/>
    <property type="match status" value="1"/>
</dbReference>
<dbReference type="PANTHER" id="PTHR10949">
    <property type="entry name" value="LIPOYL SYNTHASE"/>
    <property type="match status" value="1"/>
</dbReference>
<dbReference type="PANTHER" id="PTHR10949:SF0">
    <property type="entry name" value="LIPOYL SYNTHASE, MITOCHONDRIAL"/>
    <property type="match status" value="1"/>
</dbReference>
<dbReference type="Pfam" id="PF16881">
    <property type="entry name" value="LIAS_N"/>
    <property type="match status" value="1"/>
</dbReference>
<dbReference type="Pfam" id="PF04055">
    <property type="entry name" value="Radical_SAM"/>
    <property type="match status" value="1"/>
</dbReference>
<dbReference type="PIRSF" id="PIRSF005963">
    <property type="entry name" value="Lipoyl_synth"/>
    <property type="match status" value="1"/>
</dbReference>
<dbReference type="SFLD" id="SFLDF00271">
    <property type="entry name" value="lipoyl_synthase"/>
    <property type="match status" value="1"/>
</dbReference>
<dbReference type="SFLD" id="SFLDS00029">
    <property type="entry name" value="Radical_SAM"/>
    <property type="match status" value="1"/>
</dbReference>
<dbReference type="SMART" id="SM00729">
    <property type="entry name" value="Elp3"/>
    <property type="match status" value="1"/>
</dbReference>
<dbReference type="SUPFAM" id="SSF102114">
    <property type="entry name" value="Radical SAM enzymes"/>
    <property type="match status" value="1"/>
</dbReference>
<dbReference type="PROSITE" id="PS51918">
    <property type="entry name" value="RADICAL_SAM"/>
    <property type="match status" value="1"/>
</dbReference>
<feature type="chain" id="PRO_0000102348" description="Lipoyl synthase">
    <location>
        <begin position="1"/>
        <end position="322"/>
    </location>
</feature>
<feature type="domain" description="Radical SAM core" evidence="2">
    <location>
        <begin position="73"/>
        <end position="289"/>
    </location>
</feature>
<feature type="binding site" evidence="1">
    <location>
        <position position="61"/>
    </location>
    <ligand>
        <name>[4Fe-4S] cluster</name>
        <dbReference type="ChEBI" id="CHEBI:49883"/>
        <label>1</label>
    </ligand>
</feature>
<feature type="binding site" evidence="1">
    <location>
        <position position="66"/>
    </location>
    <ligand>
        <name>[4Fe-4S] cluster</name>
        <dbReference type="ChEBI" id="CHEBI:49883"/>
        <label>1</label>
    </ligand>
</feature>
<feature type="binding site" evidence="1">
    <location>
        <position position="72"/>
    </location>
    <ligand>
        <name>[4Fe-4S] cluster</name>
        <dbReference type="ChEBI" id="CHEBI:49883"/>
        <label>1</label>
    </ligand>
</feature>
<feature type="binding site" evidence="1">
    <location>
        <position position="87"/>
    </location>
    <ligand>
        <name>[4Fe-4S] cluster</name>
        <dbReference type="ChEBI" id="CHEBI:49883"/>
        <label>2</label>
        <note>4Fe-4S-S-AdoMet</note>
    </ligand>
</feature>
<feature type="binding site" evidence="1">
    <location>
        <position position="91"/>
    </location>
    <ligand>
        <name>[4Fe-4S] cluster</name>
        <dbReference type="ChEBI" id="CHEBI:49883"/>
        <label>2</label>
        <note>4Fe-4S-S-AdoMet</note>
    </ligand>
</feature>
<feature type="binding site" evidence="1">
    <location>
        <position position="94"/>
    </location>
    <ligand>
        <name>[4Fe-4S] cluster</name>
        <dbReference type="ChEBI" id="CHEBI:49883"/>
        <label>2</label>
        <note>4Fe-4S-S-AdoMet</note>
    </ligand>
</feature>
<feature type="binding site" evidence="1">
    <location>
        <position position="300"/>
    </location>
    <ligand>
        <name>[4Fe-4S] cluster</name>
        <dbReference type="ChEBI" id="CHEBI:49883"/>
        <label>1</label>
    </ligand>
</feature>
<accession>Q92Q94</accession>